<dbReference type="EMBL" id="CR378663">
    <property type="protein sequence ID" value="CAG18763.1"/>
    <property type="molecule type" value="Genomic_DNA"/>
</dbReference>
<dbReference type="RefSeq" id="WP_007469141.1">
    <property type="nucleotide sequence ID" value="NC_006370.1"/>
</dbReference>
<dbReference type="SMR" id="Q6LVB2"/>
<dbReference type="STRING" id="298386.PBPRA0324"/>
<dbReference type="KEGG" id="ppr:PBPRA0324"/>
<dbReference type="eggNOG" id="COG0185">
    <property type="taxonomic scope" value="Bacteria"/>
</dbReference>
<dbReference type="HOGENOM" id="CLU_144911_0_1_6"/>
<dbReference type="Proteomes" id="UP000000593">
    <property type="component" value="Chromosome 1"/>
</dbReference>
<dbReference type="GO" id="GO:0005737">
    <property type="term" value="C:cytoplasm"/>
    <property type="evidence" value="ECO:0007669"/>
    <property type="project" value="UniProtKB-ARBA"/>
</dbReference>
<dbReference type="GO" id="GO:0015935">
    <property type="term" value="C:small ribosomal subunit"/>
    <property type="evidence" value="ECO:0007669"/>
    <property type="project" value="InterPro"/>
</dbReference>
<dbReference type="GO" id="GO:0019843">
    <property type="term" value="F:rRNA binding"/>
    <property type="evidence" value="ECO:0007669"/>
    <property type="project" value="UniProtKB-UniRule"/>
</dbReference>
<dbReference type="GO" id="GO:0003735">
    <property type="term" value="F:structural constituent of ribosome"/>
    <property type="evidence" value="ECO:0007669"/>
    <property type="project" value="InterPro"/>
</dbReference>
<dbReference type="GO" id="GO:0000028">
    <property type="term" value="P:ribosomal small subunit assembly"/>
    <property type="evidence" value="ECO:0007669"/>
    <property type="project" value="TreeGrafter"/>
</dbReference>
<dbReference type="GO" id="GO:0006412">
    <property type="term" value="P:translation"/>
    <property type="evidence" value="ECO:0007669"/>
    <property type="project" value="UniProtKB-UniRule"/>
</dbReference>
<dbReference type="FunFam" id="3.30.860.10:FF:000001">
    <property type="entry name" value="30S ribosomal protein S19"/>
    <property type="match status" value="1"/>
</dbReference>
<dbReference type="Gene3D" id="3.30.860.10">
    <property type="entry name" value="30s Ribosomal Protein S19, Chain A"/>
    <property type="match status" value="1"/>
</dbReference>
<dbReference type="HAMAP" id="MF_00531">
    <property type="entry name" value="Ribosomal_uS19"/>
    <property type="match status" value="1"/>
</dbReference>
<dbReference type="InterPro" id="IPR002222">
    <property type="entry name" value="Ribosomal_uS19"/>
</dbReference>
<dbReference type="InterPro" id="IPR005732">
    <property type="entry name" value="Ribosomal_uS19_bac-type"/>
</dbReference>
<dbReference type="InterPro" id="IPR020934">
    <property type="entry name" value="Ribosomal_uS19_CS"/>
</dbReference>
<dbReference type="InterPro" id="IPR023575">
    <property type="entry name" value="Ribosomal_uS19_SF"/>
</dbReference>
<dbReference type="NCBIfam" id="TIGR01050">
    <property type="entry name" value="rpsS_bact"/>
    <property type="match status" value="1"/>
</dbReference>
<dbReference type="PANTHER" id="PTHR11880">
    <property type="entry name" value="RIBOSOMAL PROTEIN S19P FAMILY MEMBER"/>
    <property type="match status" value="1"/>
</dbReference>
<dbReference type="PANTHER" id="PTHR11880:SF8">
    <property type="entry name" value="SMALL RIBOSOMAL SUBUNIT PROTEIN US19M"/>
    <property type="match status" value="1"/>
</dbReference>
<dbReference type="Pfam" id="PF00203">
    <property type="entry name" value="Ribosomal_S19"/>
    <property type="match status" value="1"/>
</dbReference>
<dbReference type="PIRSF" id="PIRSF002144">
    <property type="entry name" value="Ribosomal_S19"/>
    <property type="match status" value="1"/>
</dbReference>
<dbReference type="PRINTS" id="PR00975">
    <property type="entry name" value="RIBOSOMALS19"/>
</dbReference>
<dbReference type="SUPFAM" id="SSF54570">
    <property type="entry name" value="Ribosomal protein S19"/>
    <property type="match status" value="1"/>
</dbReference>
<dbReference type="PROSITE" id="PS00323">
    <property type="entry name" value="RIBOSOMAL_S19"/>
    <property type="match status" value="1"/>
</dbReference>
<comment type="function">
    <text evidence="1">Protein S19 forms a complex with S13 that binds strongly to the 16S ribosomal RNA.</text>
</comment>
<comment type="similarity">
    <text evidence="1">Belongs to the universal ribosomal protein uS19 family.</text>
</comment>
<feature type="chain" id="PRO_0000129873" description="Small ribosomal subunit protein uS19">
    <location>
        <begin position="1"/>
        <end position="92"/>
    </location>
</feature>
<organism>
    <name type="scientific">Photobacterium profundum (strain SS9)</name>
    <dbReference type="NCBI Taxonomy" id="298386"/>
    <lineage>
        <taxon>Bacteria</taxon>
        <taxon>Pseudomonadati</taxon>
        <taxon>Pseudomonadota</taxon>
        <taxon>Gammaproteobacteria</taxon>
        <taxon>Vibrionales</taxon>
        <taxon>Vibrionaceae</taxon>
        <taxon>Photobacterium</taxon>
    </lineage>
</organism>
<reference key="1">
    <citation type="journal article" date="2005" name="Science">
        <title>Life at depth: Photobacterium profundum genome sequence and expression analysis.</title>
        <authorList>
            <person name="Vezzi A."/>
            <person name="Campanaro S."/>
            <person name="D'Angelo M."/>
            <person name="Simonato F."/>
            <person name="Vitulo N."/>
            <person name="Lauro F.M."/>
            <person name="Cestaro A."/>
            <person name="Malacrida G."/>
            <person name="Simionati B."/>
            <person name="Cannata N."/>
            <person name="Romualdi C."/>
            <person name="Bartlett D.H."/>
            <person name="Valle G."/>
        </authorList>
    </citation>
    <scope>NUCLEOTIDE SEQUENCE [LARGE SCALE GENOMIC DNA]</scope>
    <source>
        <strain>ATCC BAA-1253 / SS9</strain>
    </source>
</reference>
<accession>Q6LVB2</accession>
<keyword id="KW-1185">Reference proteome</keyword>
<keyword id="KW-0687">Ribonucleoprotein</keyword>
<keyword id="KW-0689">Ribosomal protein</keyword>
<keyword id="KW-0694">RNA-binding</keyword>
<keyword id="KW-0699">rRNA-binding</keyword>
<proteinExistence type="inferred from homology"/>
<protein>
    <recommendedName>
        <fullName evidence="1">Small ribosomal subunit protein uS19</fullName>
    </recommendedName>
    <alternativeName>
        <fullName evidence="2">30S ribosomal protein S19</fullName>
    </alternativeName>
</protein>
<sequence length="92" mass="10440">MPRSLKKGPFIDLHLLKKVEKAVESGDKKPVKTWSRRSMIIPQMIGLTIAVHNGRQHVPVFVSEEMIGHKLGEFAPTRTYRGHAADKKAKKR</sequence>
<name>RS19_PHOPR</name>
<gene>
    <name evidence="1" type="primary">rpsS</name>
    <name type="ordered locus">PBPRA0324</name>
</gene>
<evidence type="ECO:0000255" key="1">
    <source>
        <dbReference type="HAMAP-Rule" id="MF_00531"/>
    </source>
</evidence>
<evidence type="ECO:0000305" key="2"/>